<dbReference type="EC" id="3.5.1.108" evidence="1"/>
<dbReference type="EMBL" id="AM743169">
    <property type="protein sequence ID" value="CAQ44338.1"/>
    <property type="molecule type" value="Genomic_DNA"/>
</dbReference>
<dbReference type="RefSeq" id="WP_005408085.1">
    <property type="nucleotide sequence ID" value="NC_010943.1"/>
</dbReference>
<dbReference type="SMR" id="B2FPA9"/>
<dbReference type="EnsemblBacteria" id="CAQ44338">
    <property type="protein sequence ID" value="CAQ44338"/>
    <property type="gene ID" value="Smlt0761"/>
</dbReference>
<dbReference type="GeneID" id="93831795"/>
<dbReference type="KEGG" id="sml:Smlt0761"/>
<dbReference type="eggNOG" id="COG0774">
    <property type="taxonomic scope" value="Bacteria"/>
</dbReference>
<dbReference type="HOGENOM" id="CLU_046528_1_0_6"/>
<dbReference type="UniPathway" id="UPA00359">
    <property type="reaction ID" value="UER00478"/>
</dbReference>
<dbReference type="Proteomes" id="UP000008840">
    <property type="component" value="Chromosome"/>
</dbReference>
<dbReference type="GO" id="GO:0016020">
    <property type="term" value="C:membrane"/>
    <property type="evidence" value="ECO:0007669"/>
    <property type="project" value="GOC"/>
</dbReference>
<dbReference type="GO" id="GO:0046872">
    <property type="term" value="F:metal ion binding"/>
    <property type="evidence" value="ECO:0007669"/>
    <property type="project" value="UniProtKB-KW"/>
</dbReference>
<dbReference type="GO" id="GO:0103117">
    <property type="term" value="F:UDP-3-O-acyl-N-acetylglucosamine deacetylase activity"/>
    <property type="evidence" value="ECO:0007669"/>
    <property type="project" value="UniProtKB-UniRule"/>
</dbReference>
<dbReference type="GO" id="GO:0009245">
    <property type="term" value="P:lipid A biosynthetic process"/>
    <property type="evidence" value="ECO:0007669"/>
    <property type="project" value="UniProtKB-UniRule"/>
</dbReference>
<dbReference type="Gene3D" id="3.30.230.20">
    <property type="entry name" value="lpxc deacetylase, domain 1"/>
    <property type="match status" value="1"/>
</dbReference>
<dbReference type="Gene3D" id="3.30.1700.10">
    <property type="entry name" value="lpxc deacetylase, domain 2"/>
    <property type="match status" value="1"/>
</dbReference>
<dbReference type="HAMAP" id="MF_00388">
    <property type="entry name" value="LpxC"/>
    <property type="match status" value="1"/>
</dbReference>
<dbReference type="InterPro" id="IPR020568">
    <property type="entry name" value="Ribosomal_Su5_D2-typ_SF"/>
</dbReference>
<dbReference type="InterPro" id="IPR004463">
    <property type="entry name" value="UDP-acyl_GlcNac_deAcase"/>
</dbReference>
<dbReference type="InterPro" id="IPR011334">
    <property type="entry name" value="UDP-acyl_GlcNac_deAcase_C"/>
</dbReference>
<dbReference type="InterPro" id="IPR015870">
    <property type="entry name" value="UDP-acyl_N-AcGlcN_deAcase_N"/>
</dbReference>
<dbReference type="NCBIfam" id="TIGR00325">
    <property type="entry name" value="lpxC"/>
    <property type="match status" value="1"/>
</dbReference>
<dbReference type="PANTHER" id="PTHR33694">
    <property type="entry name" value="UDP-3-O-ACYL-N-ACETYLGLUCOSAMINE DEACETYLASE 1, MITOCHONDRIAL-RELATED"/>
    <property type="match status" value="1"/>
</dbReference>
<dbReference type="PANTHER" id="PTHR33694:SF1">
    <property type="entry name" value="UDP-3-O-ACYL-N-ACETYLGLUCOSAMINE DEACETYLASE 1, MITOCHONDRIAL-RELATED"/>
    <property type="match status" value="1"/>
</dbReference>
<dbReference type="Pfam" id="PF03331">
    <property type="entry name" value="LpxC"/>
    <property type="match status" value="1"/>
</dbReference>
<dbReference type="SUPFAM" id="SSF54211">
    <property type="entry name" value="Ribosomal protein S5 domain 2-like"/>
    <property type="match status" value="2"/>
</dbReference>
<keyword id="KW-0378">Hydrolase</keyword>
<keyword id="KW-0441">Lipid A biosynthesis</keyword>
<keyword id="KW-0444">Lipid biosynthesis</keyword>
<keyword id="KW-0443">Lipid metabolism</keyword>
<keyword id="KW-0479">Metal-binding</keyword>
<keyword id="KW-1185">Reference proteome</keyword>
<keyword id="KW-0862">Zinc</keyword>
<reference key="1">
    <citation type="journal article" date="2008" name="Genome Biol.">
        <title>The complete genome, comparative and functional analysis of Stenotrophomonas maltophilia reveals an organism heavily shielded by drug resistance determinants.</title>
        <authorList>
            <person name="Crossman L.C."/>
            <person name="Gould V.C."/>
            <person name="Dow J.M."/>
            <person name="Vernikos G.S."/>
            <person name="Okazaki A."/>
            <person name="Sebaihia M."/>
            <person name="Saunders D."/>
            <person name="Arrowsmith C."/>
            <person name="Carver T."/>
            <person name="Peters N."/>
            <person name="Adlem E."/>
            <person name="Kerhornou A."/>
            <person name="Lord A."/>
            <person name="Murphy L."/>
            <person name="Seeger K."/>
            <person name="Squares R."/>
            <person name="Rutter S."/>
            <person name="Quail M.A."/>
            <person name="Rajandream M.A."/>
            <person name="Harris D."/>
            <person name="Churcher C."/>
            <person name="Bentley S.D."/>
            <person name="Parkhill J."/>
            <person name="Thomson N.R."/>
            <person name="Avison M.B."/>
        </authorList>
    </citation>
    <scope>NUCLEOTIDE SEQUENCE [LARGE SCALE GENOMIC DNA]</scope>
    <source>
        <strain>K279a</strain>
    </source>
</reference>
<sequence>MIQQRTLKNTIRATGVGLHSGDKVYMTLRPAPVNHGIVFRRVDLDPVVEVPAKAELVTEVTLCTGLTCNDAKIQTVEHLMSALAGLGVDNIIVELSSAELPIMDGSAGPFVFLLQSAGIVEQDAPKRFIRVLKTVEVTEGDKVARFSPYEGYKLGFTIQFDHPMIPAKQSRQEIEFSTLAYTKEISRARTFGFMRDLEYMRERNLGLGGSMDNAIVLDEFRVLNEDGLRYADEFVRHKILDAIGDLYLAGGQVLGAYEGFKSGHALNNKLVRALMADATAWEWVSFDSPATPDPVEYATPAYA</sequence>
<accession>B2FPA9</accession>
<feature type="chain" id="PRO_1000122826" description="UDP-3-O-acyl-N-acetylglucosamine deacetylase">
    <location>
        <begin position="1"/>
        <end position="303"/>
    </location>
</feature>
<feature type="active site" description="Proton donor" evidence="1">
    <location>
        <position position="264"/>
    </location>
</feature>
<feature type="binding site" evidence="1">
    <location>
        <position position="78"/>
    </location>
    <ligand>
        <name>Zn(2+)</name>
        <dbReference type="ChEBI" id="CHEBI:29105"/>
    </ligand>
</feature>
<feature type="binding site" evidence="1">
    <location>
        <position position="237"/>
    </location>
    <ligand>
        <name>Zn(2+)</name>
        <dbReference type="ChEBI" id="CHEBI:29105"/>
    </ligand>
</feature>
<feature type="binding site" evidence="1">
    <location>
        <position position="241"/>
    </location>
    <ligand>
        <name>Zn(2+)</name>
        <dbReference type="ChEBI" id="CHEBI:29105"/>
    </ligand>
</feature>
<evidence type="ECO:0000255" key="1">
    <source>
        <dbReference type="HAMAP-Rule" id="MF_00388"/>
    </source>
</evidence>
<proteinExistence type="inferred from homology"/>
<comment type="function">
    <text evidence="1">Catalyzes the hydrolysis of UDP-3-O-myristoyl-N-acetylglucosamine to form UDP-3-O-myristoylglucosamine and acetate, the committed step in lipid A biosynthesis.</text>
</comment>
<comment type="catalytic activity">
    <reaction evidence="1">
        <text>a UDP-3-O-[(3R)-3-hydroxyacyl]-N-acetyl-alpha-D-glucosamine + H2O = a UDP-3-O-[(3R)-3-hydroxyacyl]-alpha-D-glucosamine + acetate</text>
        <dbReference type="Rhea" id="RHEA:67816"/>
        <dbReference type="ChEBI" id="CHEBI:15377"/>
        <dbReference type="ChEBI" id="CHEBI:30089"/>
        <dbReference type="ChEBI" id="CHEBI:137740"/>
        <dbReference type="ChEBI" id="CHEBI:173225"/>
        <dbReference type="EC" id="3.5.1.108"/>
    </reaction>
</comment>
<comment type="cofactor">
    <cofactor evidence="1">
        <name>Zn(2+)</name>
        <dbReference type="ChEBI" id="CHEBI:29105"/>
    </cofactor>
</comment>
<comment type="pathway">
    <text evidence="1">Glycolipid biosynthesis; lipid IV(A) biosynthesis; lipid IV(A) from (3R)-3-hydroxytetradecanoyl-[acyl-carrier-protein] and UDP-N-acetyl-alpha-D-glucosamine: step 2/6.</text>
</comment>
<comment type="similarity">
    <text evidence="1">Belongs to the LpxC family.</text>
</comment>
<protein>
    <recommendedName>
        <fullName evidence="1">UDP-3-O-acyl-N-acetylglucosamine deacetylase</fullName>
        <shortName evidence="1">UDP-3-O-acyl-GlcNAc deacetylase</shortName>
        <ecNumber evidence="1">3.5.1.108</ecNumber>
    </recommendedName>
    <alternativeName>
        <fullName evidence="1">UDP-3-O-[R-3-hydroxymyristoyl]-N-acetylglucosamine deacetylase</fullName>
    </alternativeName>
</protein>
<gene>
    <name evidence="1" type="primary">lpxC</name>
    <name type="ordered locus">Smlt0761</name>
</gene>
<name>LPXC_STRMK</name>
<organism>
    <name type="scientific">Stenotrophomonas maltophilia (strain K279a)</name>
    <dbReference type="NCBI Taxonomy" id="522373"/>
    <lineage>
        <taxon>Bacteria</taxon>
        <taxon>Pseudomonadati</taxon>
        <taxon>Pseudomonadota</taxon>
        <taxon>Gammaproteobacteria</taxon>
        <taxon>Lysobacterales</taxon>
        <taxon>Lysobacteraceae</taxon>
        <taxon>Stenotrophomonas</taxon>
        <taxon>Stenotrophomonas maltophilia group</taxon>
    </lineage>
</organism>